<evidence type="ECO:0000255" key="1">
    <source>
        <dbReference type="HAMAP-Rule" id="MF_01331"/>
    </source>
</evidence>
<evidence type="ECO:0000305" key="2"/>
<dbReference type="EMBL" id="CP001139">
    <property type="protein sequence ID" value="ACH65041.1"/>
    <property type="molecule type" value="Genomic_DNA"/>
</dbReference>
<dbReference type="RefSeq" id="WP_005417234.1">
    <property type="nucleotide sequence ID" value="NC_011184.1"/>
</dbReference>
<dbReference type="SMR" id="B5FG14"/>
<dbReference type="GeneID" id="54162863"/>
<dbReference type="KEGG" id="vfm:VFMJ11_0230"/>
<dbReference type="HOGENOM" id="CLU_083987_3_3_6"/>
<dbReference type="Proteomes" id="UP000001857">
    <property type="component" value="Chromosome I"/>
</dbReference>
<dbReference type="GO" id="GO:0022625">
    <property type="term" value="C:cytosolic large ribosomal subunit"/>
    <property type="evidence" value="ECO:0007669"/>
    <property type="project" value="TreeGrafter"/>
</dbReference>
<dbReference type="GO" id="GO:0019843">
    <property type="term" value="F:rRNA binding"/>
    <property type="evidence" value="ECO:0007669"/>
    <property type="project" value="UniProtKB-UniRule"/>
</dbReference>
<dbReference type="GO" id="GO:0003735">
    <property type="term" value="F:structural constituent of ribosome"/>
    <property type="evidence" value="ECO:0007669"/>
    <property type="project" value="InterPro"/>
</dbReference>
<dbReference type="GO" id="GO:0006412">
    <property type="term" value="P:translation"/>
    <property type="evidence" value="ECO:0007669"/>
    <property type="project" value="UniProtKB-UniRule"/>
</dbReference>
<dbReference type="CDD" id="cd00336">
    <property type="entry name" value="Ribosomal_L22"/>
    <property type="match status" value="1"/>
</dbReference>
<dbReference type="FunFam" id="3.90.470.10:FF:000001">
    <property type="entry name" value="50S ribosomal protein L22"/>
    <property type="match status" value="1"/>
</dbReference>
<dbReference type="Gene3D" id="3.90.470.10">
    <property type="entry name" value="Ribosomal protein L22/L17"/>
    <property type="match status" value="1"/>
</dbReference>
<dbReference type="HAMAP" id="MF_01331_B">
    <property type="entry name" value="Ribosomal_uL22_B"/>
    <property type="match status" value="1"/>
</dbReference>
<dbReference type="InterPro" id="IPR001063">
    <property type="entry name" value="Ribosomal_uL22"/>
</dbReference>
<dbReference type="InterPro" id="IPR005727">
    <property type="entry name" value="Ribosomal_uL22_bac/chlpt-type"/>
</dbReference>
<dbReference type="InterPro" id="IPR047867">
    <property type="entry name" value="Ribosomal_uL22_bac/org-type"/>
</dbReference>
<dbReference type="InterPro" id="IPR018260">
    <property type="entry name" value="Ribosomal_uL22_CS"/>
</dbReference>
<dbReference type="InterPro" id="IPR036394">
    <property type="entry name" value="Ribosomal_uL22_sf"/>
</dbReference>
<dbReference type="NCBIfam" id="TIGR01044">
    <property type="entry name" value="rplV_bact"/>
    <property type="match status" value="1"/>
</dbReference>
<dbReference type="PANTHER" id="PTHR13501">
    <property type="entry name" value="CHLOROPLAST 50S RIBOSOMAL PROTEIN L22-RELATED"/>
    <property type="match status" value="1"/>
</dbReference>
<dbReference type="PANTHER" id="PTHR13501:SF8">
    <property type="entry name" value="LARGE RIBOSOMAL SUBUNIT PROTEIN UL22M"/>
    <property type="match status" value="1"/>
</dbReference>
<dbReference type="Pfam" id="PF00237">
    <property type="entry name" value="Ribosomal_L22"/>
    <property type="match status" value="1"/>
</dbReference>
<dbReference type="SUPFAM" id="SSF54843">
    <property type="entry name" value="Ribosomal protein L22"/>
    <property type="match status" value="1"/>
</dbReference>
<dbReference type="PROSITE" id="PS00464">
    <property type="entry name" value="RIBOSOMAL_L22"/>
    <property type="match status" value="1"/>
</dbReference>
<name>RL22_ALIFM</name>
<proteinExistence type="inferred from homology"/>
<feature type="chain" id="PRO_1000142325" description="Large ribosomal subunit protein uL22">
    <location>
        <begin position="1"/>
        <end position="110"/>
    </location>
</feature>
<protein>
    <recommendedName>
        <fullName evidence="1">Large ribosomal subunit protein uL22</fullName>
    </recommendedName>
    <alternativeName>
        <fullName evidence="2">50S ribosomal protein L22</fullName>
    </alternativeName>
</protein>
<keyword id="KW-0687">Ribonucleoprotein</keyword>
<keyword id="KW-0689">Ribosomal protein</keyword>
<keyword id="KW-0694">RNA-binding</keyword>
<keyword id="KW-0699">rRNA-binding</keyword>
<comment type="function">
    <text evidence="1">This protein binds specifically to 23S rRNA; its binding is stimulated by other ribosomal proteins, e.g. L4, L17, and L20. It is important during the early stages of 50S assembly. It makes multiple contacts with different domains of the 23S rRNA in the assembled 50S subunit and ribosome (By similarity).</text>
</comment>
<comment type="function">
    <text evidence="1">The globular domain of the protein is located near the polypeptide exit tunnel on the outside of the subunit, while an extended beta-hairpin is found that lines the wall of the exit tunnel in the center of the 70S ribosome.</text>
</comment>
<comment type="subunit">
    <text evidence="1">Part of the 50S ribosomal subunit.</text>
</comment>
<comment type="similarity">
    <text evidence="1">Belongs to the universal ribosomal protein uL22 family.</text>
</comment>
<sequence>MEAIAKHRFAGISPQKARLVADQVRGKSVDQALEILTFSNKKAAVLVKKVLESAIANAEHNEGADIDDLNVAKIFVDEGPIMKRIMPRAKGRADRILKRSSHITIVVADR</sequence>
<accession>B5FG14</accession>
<reference key="1">
    <citation type="submission" date="2008-08" db="EMBL/GenBank/DDBJ databases">
        <title>Complete sequence of Vibrio fischeri strain MJ11.</title>
        <authorList>
            <person name="Mandel M.J."/>
            <person name="Stabb E.V."/>
            <person name="Ruby E.G."/>
            <person name="Ferriera S."/>
            <person name="Johnson J."/>
            <person name="Kravitz S."/>
            <person name="Beeson K."/>
            <person name="Sutton G."/>
            <person name="Rogers Y.-H."/>
            <person name="Friedman R."/>
            <person name="Frazier M."/>
            <person name="Venter J.C."/>
        </authorList>
    </citation>
    <scope>NUCLEOTIDE SEQUENCE [LARGE SCALE GENOMIC DNA]</scope>
    <source>
        <strain>MJ11</strain>
    </source>
</reference>
<organism>
    <name type="scientific">Aliivibrio fischeri (strain MJ11)</name>
    <name type="common">Vibrio fischeri</name>
    <dbReference type="NCBI Taxonomy" id="388396"/>
    <lineage>
        <taxon>Bacteria</taxon>
        <taxon>Pseudomonadati</taxon>
        <taxon>Pseudomonadota</taxon>
        <taxon>Gammaproteobacteria</taxon>
        <taxon>Vibrionales</taxon>
        <taxon>Vibrionaceae</taxon>
        <taxon>Aliivibrio</taxon>
    </lineage>
</organism>
<gene>
    <name evidence="1" type="primary">rplV</name>
    <name type="ordered locus">VFMJ11_0230</name>
</gene>